<protein>
    <recommendedName>
        <fullName>Lysine--tRNA ligase</fullName>
        <ecNumber>6.1.1.6</ecNumber>
    </recommendedName>
    <alternativeName>
        <fullName>Lysyl-tRNA synthetase</fullName>
        <shortName>LysRS</shortName>
    </alternativeName>
</protein>
<keyword id="KW-0002">3D-structure</keyword>
<keyword id="KW-0030">Aminoacyl-tRNA synthetase</keyword>
<keyword id="KW-0067">ATP-binding</keyword>
<keyword id="KW-0963">Cytoplasm</keyword>
<keyword id="KW-0436">Ligase</keyword>
<keyword id="KW-0479">Metal-binding</keyword>
<keyword id="KW-0547">Nucleotide-binding</keyword>
<keyword id="KW-0648">Protein biosynthesis</keyword>
<keyword id="KW-0862">Zinc</keyword>
<proteinExistence type="evidence at protein level"/>
<organism>
    <name type="scientific">Pyrococcus horikoshii (strain ATCC 700860 / DSM 12428 / JCM 9974 / NBRC 100139 / OT-3)</name>
    <dbReference type="NCBI Taxonomy" id="70601"/>
    <lineage>
        <taxon>Archaea</taxon>
        <taxon>Methanobacteriati</taxon>
        <taxon>Methanobacteriota</taxon>
        <taxon>Thermococci</taxon>
        <taxon>Thermococcales</taxon>
        <taxon>Thermococcaceae</taxon>
        <taxon>Pyrococcus</taxon>
    </lineage>
</organism>
<evidence type="ECO:0000305" key="1"/>
<evidence type="ECO:0007829" key="2">
    <source>
        <dbReference type="PDB" id="1IRX"/>
    </source>
</evidence>
<comment type="catalytic activity">
    <reaction>
        <text>tRNA(Lys) + L-lysine + ATP = L-lysyl-tRNA(Lys) + AMP + diphosphate</text>
        <dbReference type="Rhea" id="RHEA:20792"/>
        <dbReference type="Rhea" id="RHEA-COMP:9696"/>
        <dbReference type="Rhea" id="RHEA-COMP:9697"/>
        <dbReference type="ChEBI" id="CHEBI:30616"/>
        <dbReference type="ChEBI" id="CHEBI:32551"/>
        <dbReference type="ChEBI" id="CHEBI:33019"/>
        <dbReference type="ChEBI" id="CHEBI:78442"/>
        <dbReference type="ChEBI" id="CHEBI:78529"/>
        <dbReference type="ChEBI" id="CHEBI:456215"/>
        <dbReference type="EC" id="6.1.1.6"/>
    </reaction>
</comment>
<comment type="cofactor">
    <cofactor>
        <name>Zn(2+)</name>
        <dbReference type="ChEBI" id="CHEBI:29105"/>
    </cofactor>
    <text>Binds 2 Zn(2+) ions per subunit.</text>
</comment>
<comment type="subcellular location">
    <subcellularLocation>
        <location>Cytoplasm</location>
    </subcellularLocation>
</comment>
<comment type="similarity">
    <text evidence="1">Belongs to the class-I aminoacyl-tRNA synthetase family.</text>
</comment>
<dbReference type="EC" id="6.1.1.6"/>
<dbReference type="EMBL" id="BA000001">
    <property type="protein sequence ID" value="BAA29296.1"/>
    <property type="molecule type" value="Genomic_DNA"/>
</dbReference>
<dbReference type="PIR" id="A71246">
    <property type="entry name" value="A71246"/>
</dbReference>
<dbReference type="RefSeq" id="WP_010884327.1">
    <property type="nucleotide sequence ID" value="NC_000961.1"/>
</dbReference>
<dbReference type="PDB" id="1IRX">
    <property type="method" value="X-ray"/>
    <property type="resolution" value="2.60 A"/>
    <property type="chains" value="A/B=1-523"/>
</dbReference>
<dbReference type="PDBsum" id="1IRX"/>
<dbReference type="SMR" id="O57963"/>
<dbReference type="STRING" id="70601.gene:9377140"/>
<dbReference type="EnsemblBacteria" id="BAA29296">
    <property type="protein sequence ID" value="BAA29296"/>
    <property type="gene ID" value="BAA29296"/>
</dbReference>
<dbReference type="GeneID" id="1444114"/>
<dbReference type="KEGG" id="pho:PH0224"/>
<dbReference type="eggNOG" id="arCOG00485">
    <property type="taxonomic scope" value="Archaea"/>
</dbReference>
<dbReference type="OrthoDB" id="6838at2157"/>
<dbReference type="BRENDA" id="6.1.1.6">
    <property type="organism ID" value="5244"/>
</dbReference>
<dbReference type="EvolutionaryTrace" id="O57963"/>
<dbReference type="Proteomes" id="UP000000752">
    <property type="component" value="Chromosome"/>
</dbReference>
<dbReference type="GO" id="GO:0005737">
    <property type="term" value="C:cytoplasm"/>
    <property type="evidence" value="ECO:0007669"/>
    <property type="project" value="UniProtKB-SubCell"/>
</dbReference>
<dbReference type="GO" id="GO:0005524">
    <property type="term" value="F:ATP binding"/>
    <property type="evidence" value="ECO:0007669"/>
    <property type="project" value="UniProtKB-UniRule"/>
</dbReference>
<dbReference type="GO" id="GO:0004824">
    <property type="term" value="F:lysine-tRNA ligase activity"/>
    <property type="evidence" value="ECO:0007669"/>
    <property type="project" value="UniProtKB-UniRule"/>
</dbReference>
<dbReference type="GO" id="GO:0046872">
    <property type="term" value="F:metal ion binding"/>
    <property type="evidence" value="ECO:0007669"/>
    <property type="project" value="UniProtKB-KW"/>
</dbReference>
<dbReference type="GO" id="GO:0000049">
    <property type="term" value="F:tRNA binding"/>
    <property type="evidence" value="ECO:0007669"/>
    <property type="project" value="InterPro"/>
</dbReference>
<dbReference type="GO" id="GO:0006430">
    <property type="term" value="P:lysyl-tRNA aminoacylation"/>
    <property type="evidence" value="ECO:0007669"/>
    <property type="project" value="UniProtKB-UniRule"/>
</dbReference>
<dbReference type="CDD" id="cd00674">
    <property type="entry name" value="LysRS_core_class_I"/>
    <property type="match status" value="1"/>
</dbReference>
<dbReference type="Gene3D" id="1.10.10.350">
    <property type="match status" value="1"/>
</dbReference>
<dbReference type="Gene3D" id="1.10.10.770">
    <property type="match status" value="1"/>
</dbReference>
<dbReference type="Gene3D" id="3.40.50.620">
    <property type="entry name" value="HUPs"/>
    <property type="match status" value="2"/>
</dbReference>
<dbReference type="Gene3D" id="6.10.20.10">
    <property type="entry name" value="Lysine tRNA ligase, stem contact fold domain"/>
    <property type="match status" value="1"/>
</dbReference>
<dbReference type="HAMAP" id="MF_00177">
    <property type="entry name" value="Lys_tRNA_synth_class1"/>
    <property type="match status" value="1"/>
</dbReference>
<dbReference type="InterPro" id="IPR045462">
    <property type="entry name" value="aa-tRNA-synth_I_cd-bd"/>
</dbReference>
<dbReference type="InterPro" id="IPR020751">
    <property type="entry name" value="aa-tRNA-synth_I_codon-bd_sub2"/>
</dbReference>
<dbReference type="InterPro" id="IPR001412">
    <property type="entry name" value="aa-tRNA-synth_I_CS"/>
</dbReference>
<dbReference type="InterPro" id="IPR008925">
    <property type="entry name" value="aa_tRNA-synth_I_cd-bd_sf"/>
</dbReference>
<dbReference type="InterPro" id="IPR002904">
    <property type="entry name" value="Lys-tRNA-ligase"/>
</dbReference>
<dbReference type="InterPro" id="IPR042078">
    <property type="entry name" value="Lys-tRNA-ligase_SC_fold"/>
</dbReference>
<dbReference type="InterPro" id="IPR014729">
    <property type="entry name" value="Rossmann-like_a/b/a_fold"/>
</dbReference>
<dbReference type="NCBIfam" id="TIGR00467">
    <property type="entry name" value="lysS_arch"/>
    <property type="match status" value="1"/>
</dbReference>
<dbReference type="PANTHER" id="PTHR37940">
    <property type="entry name" value="LYSINE--TRNA LIGASE"/>
    <property type="match status" value="1"/>
</dbReference>
<dbReference type="PANTHER" id="PTHR37940:SF1">
    <property type="entry name" value="LYSINE--TRNA LIGASE"/>
    <property type="match status" value="1"/>
</dbReference>
<dbReference type="Pfam" id="PF19269">
    <property type="entry name" value="Anticodon_2"/>
    <property type="match status" value="1"/>
</dbReference>
<dbReference type="Pfam" id="PF01921">
    <property type="entry name" value="tRNA-synt_1f"/>
    <property type="match status" value="1"/>
</dbReference>
<dbReference type="SUPFAM" id="SSF48163">
    <property type="entry name" value="An anticodon-binding domain of class I aminoacyl-tRNA synthetases"/>
    <property type="match status" value="1"/>
</dbReference>
<dbReference type="SUPFAM" id="SSF52374">
    <property type="entry name" value="Nucleotidylyl transferase"/>
    <property type="match status" value="1"/>
</dbReference>
<dbReference type="PROSITE" id="PS00178">
    <property type="entry name" value="AA_TRNA_LIGASE_I"/>
    <property type="match status" value="1"/>
</dbReference>
<feature type="chain" id="PRO_0000152760" description="Lysine--tRNA ligase">
    <location>
        <begin position="1"/>
        <end position="523"/>
    </location>
</feature>
<feature type="short sequence motif" description="'HIGH' region">
    <location>
        <begin position="30"/>
        <end position="38"/>
    </location>
</feature>
<feature type="short sequence motif" description="'KMSKS' region">
    <location>
        <begin position="279"/>
        <end position="283"/>
    </location>
</feature>
<feature type="binding site">
    <location>
        <position position="95"/>
    </location>
    <ligand>
        <name>Zn(2+)</name>
        <dbReference type="ChEBI" id="CHEBI:29105"/>
        <label>1</label>
    </ligand>
</feature>
<feature type="binding site">
    <location>
        <position position="99"/>
    </location>
    <ligand>
        <name>Zn(2+)</name>
        <dbReference type="ChEBI" id="CHEBI:29105"/>
        <label>1</label>
    </ligand>
</feature>
<feature type="binding site">
    <location>
        <position position="100"/>
    </location>
    <ligand>
        <name>Zn(2+)</name>
        <dbReference type="ChEBI" id="CHEBI:29105"/>
        <label>1</label>
    </ligand>
</feature>
<feature type="binding site">
    <location>
        <position position="106"/>
    </location>
    <ligand>
        <name>Zn(2+)</name>
        <dbReference type="ChEBI" id="CHEBI:29105"/>
        <label>1</label>
    </ligand>
</feature>
<feature type="binding site">
    <location>
        <position position="177"/>
    </location>
    <ligand>
        <name>Zn(2+)</name>
        <dbReference type="ChEBI" id="CHEBI:29105"/>
        <label>2</label>
    </ligand>
</feature>
<feature type="binding site">
    <location>
        <position position="180"/>
    </location>
    <ligand>
        <name>Zn(2+)</name>
        <dbReference type="ChEBI" id="CHEBI:29105"/>
        <label>2</label>
    </ligand>
</feature>
<feature type="binding site">
    <location>
        <position position="199"/>
    </location>
    <ligand>
        <name>Zn(2+)</name>
        <dbReference type="ChEBI" id="CHEBI:29105"/>
        <label>2</label>
    </ligand>
</feature>
<feature type="binding site">
    <location>
        <position position="203"/>
    </location>
    <ligand>
        <name>Zn(2+)</name>
        <dbReference type="ChEBI" id="CHEBI:29105"/>
        <label>2</label>
    </ligand>
</feature>
<feature type="helix" evidence="2">
    <location>
        <begin position="4"/>
        <end position="15"/>
    </location>
</feature>
<feature type="strand" evidence="2">
    <location>
        <begin position="20"/>
        <end position="28"/>
    </location>
</feature>
<feature type="helix" evidence="2">
    <location>
        <begin position="36"/>
        <end position="53"/>
    </location>
</feature>
<feature type="turn" evidence="2">
    <location>
        <begin position="54"/>
        <end position="56"/>
    </location>
</feature>
<feature type="strand" evidence="2">
    <location>
        <begin position="58"/>
        <end position="65"/>
    </location>
</feature>
<feature type="strand" evidence="2">
    <location>
        <begin position="76"/>
        <end position="78"/>
    </location>
</feature>
<feature type="helix" evidence="2">
    <location>
        <begin position="80"/>
        <end position="85"/>
    </location>
</feature>
<feature type="turn" evidence="2">
    <location>
        <begin position="90"/>
        <end position="92"/>
    </location>
</feature>
<feature type="strand" evidence="2">
    <location>
        <begin position="98"/>
        <end position="102"/>
    </location>
</feature>
<feature type="helix" evidence="2">
    <location>
        <begin position="103"/>
        <end position="116"/>
    </location>
</feature>
<feature type="turn" evidence="2">
    <location>
        <begin position="117"/>
        <end position="119"/>
    </location>
</feature>
<feature type="strand" evidence="2">
    <location>
        <begin position="123"/>
        <end position="126"/>
    </location>
</feature>
<feature type="helix" evidence="2">
    <location>
        <begin position="127"/>
        <end position="132"/>
    </location>
</feature>
<feature type="turn" evidence="2">
    <location>
        <begin position="133"/>
        <end position="136"/>
    </location>
</feature>
<feature type="helix" evidence="2">
    <location>
        <begin position="137"/>
        <end position="145"/>
    </location>
</feature>
<feature type="helix" evidence="2">
    <location>
        <begin position="147"/>
        <end position="160"/>
    </location>
</feature>
<feature type="strand" evidence="2">
    <location>
        <begin position="172"/>
        <end position="176"/>
    </location>
</feature>
<feature type="turn" evidence="2">
    <location>
        <begin position="178"/>
        <end position="180"/>
    </location>
</feature>
<feature type="strand" evidence="2">
    <location>
        <begin position="186"/>
        <end position="189"/>
    </location>
</feature>
<feature type="strand" evidence="2">
    <location>
        <begin position="191"/>
        <end position="193"/>
    </location>
</feature>
<feature type="strand" evidence="2">
    <location>
        <begin position="195"/>
        <end position="197"/>
    </location>
</feature>
<feature type="strand" evidence="2">
    <location>
        <begin position="200"/>
        <end position="202"/>
    </location>
</feature>
<feature type="strand" evidence="2">
    <location>
        <begin position="214"/>
        <end position="216"/>
    </location>
</feature>
<feature type="helix" evidence="2">
    <location>
        <begin position="218"/>
        <end position="228"/>
    </location>
</feature>
<feature type="helix" evidence="2">
    <location>
        <begin position="238"/>
        <end position="241"/>
    </location>
</feature>
<feature type="helix" evidence="2">
    <location>
        <begin position="246"/>
        <end position="258"/>
    </location>
</feature>
<feature type="strand" evidence="2">
    <location>
        <begin position="271"/>
        <end position="274"/>
    </location>
</feature>
<feature type="helix" evidence="2">
    <location>
        <begin position="290"/>
        <end position="294"/>
    </location>
</feature>
<feature type="helix" evidence="2">
    <location>
        <begin position="299"/>
        <end position="307"/>
    </location>
</feature>
<feature type="strand" evidence="2">
    <location>
        <begin position="315"/>
        <end position="317"/>
    </location>
</feature>
<feature type="helix" evidence="2">
    <location>
        <begin position="323"/>
        <end position="337"/>
    </location>
</feature>
<feature type="helix" evidence="2">
    <location>
        <begin position="349"/>
        <end position="357"/>
    </location>
</feature>
<feature type="helix" evidence="2">
    <location>
        <begin position="371"/>
        <end position="377"/>
    </location>
</feature>
<feature type="helix" evidence="2">
    <location>
        <begin position="385"/>
        <end position="394"/>
    </location>
</feature>
<feature type="helix" evidence="2">
    <location>
        <begin position="404"/>
        <end position="423"/>
    </location>
</feature>
<feature type="helix" evidence="2">
    <location>
        <begin position="427"/>
        <end position="429"/>
    </location>
</feature>
<feature type="helix" evidence="2">
    <location>
        <begin position="444"/>
        <end position="458"/>
    </location>
</feature>
<feature type="helix" evidence="2">
    <location>
        <begin position="465"/>
        <end position="479"/>
    </location>
</feature>
<feature type="helix" evidence="2">
    <location>
        <begin position="483"/>
        <end position="495"/>
    </location>
</feature>
<feature type="strand" evidence="2">
    <location>
        <begin position="496"/>
        <end position="499"/>
    </location>
</feature>
<feature type="helix" evidence="2">
    <location>
        <begin position="503"/>
        <end position="508"/>
    </location>
</feature>
<feature type="helix" evidence="2">
    <location>
        <begin position="512"/>
        <end position="519"/>
    </location>
</feature>
<accession>O57963</accession>
<reference key="1">
    <citation type="journal article" date="1998" name="DNA Res.">
        <title>Complete sequence and gene organization of the genome of a hyper-thermophilic archaebacterium, Pyrococcus horikoshii OT3.</title>
        <authorList>
            <person name="Kawarabayasi Y."/>
            <person name="Sawada M."/>
            <person name="Horikawa H."/>
            <person name="Haikawa Y."/>
            <person name="Hino Y."/>
            <person name="Yamamoto S."/>
            <person name="Sekine M."/>
            <person name="Baba S."/>
            <person name="Kosugi H."/>
            <person name="Hosoyama A."/>
            <person name="Nagai Y."/>
            <person name="Sakai M."/>
            <person name="Ogura K."/>
            <person name="Otsuka R."/>
            <person name="Nakazawa H."/>
            <person name="Takamiya M."/>
            <person name="Ohfuku Y."/>
            <person name="Funahashi T."/>
            <person name="Tanaka T."/>
            <person name="Kudoh Y."/>
            <person name="Yamazaki J."/>
            <person name="Kushida N."/>
            <person name="Oguchi A."/>
            <person name="Aoki K."/>
            <person name="Yoshizawa T."/>
            <person name="Nakamura Y."/>
            <person name="Robb F.T."/>
            <person name="Horikoshi K."/>
            <person name="Masuchi Y."/>
            <person name="Shizuya H."/>
            <person name="Kikuchi H."/>
        </authorList>
    </citation>
    <scope>NUCLEOTIDE SEQUENCE [LARGE SCALE GENOMIC DNA]</scope>
    <source>
        <strain>ATCC 700860 / DSM 12428 / JCM 9974 / NBRC 100139 / OT-3</strain>
    </source>
</reference>
<reference key="2">
    <citation type="journal article" date="2002" name="Nat. Struct. Biol.">
        <title>Functional convergence of two lysyl-tRNA synthetases with unrelated topologies.</title>
        <authorList>
            <person name="Terada T."/>
            <person name="Nureki O."/>
            <person name="Ishitani R."/>
            <person name="Ambrogelly A."/>
            <person name="Ibba M."/>
            <person name="Soell D."/>
            <person name="Yokoyama S."/>
        </authorList>
    </citation>
    <scope>X-RAY CRYSTALLOGRAPHY (2.6 ANGSTROMS)</scope>
</reference>
<name>SYK_PYRHO</name>
<sequence length="523" mass="61579">MVHWADYIADKIIRERGEKEKYVVESGITPSGYVHVGNFRELFTAYIVGHALRDKGYEVRHIHMWDDYDRFRKVPRNVPQEWKDYLGMPISEVPDPWGCHESYAEHFMRKFEEEVEKLGIEVDFLYASELYKRGEYSEEIRLAFEKRDKIMEILNKYREIAKQPPLPENWWPAMVYCPEHRREAEIIEWDGGWKVKYKCPEGHEGWVDIRSGNVKLRWRVDWPMRWSHFGVDFEPAGKDHLVAGSSYDTGKEIIKEVYGKEAPLSLMYEFVGIKGQKGKMSGSKGNVILLSDLYEVLEPGLVRFIYARHRPNKEIKIDLGLGILNLYDEFDKVERIYFGVEGGKGDDEELRRTYELSMPKKPERLVAQAPFRFLAVLVQLPHLTEEDIINVLIKQGHIPRDLSKEDVERVKLRINLARNWVKKYAPEDVKFSILEKPPEVEVSEDVREAMNEVAEWLENHEEFSVEEFNNILFEVAKRRGISSREWFSTLYRLFIGKERGPRLASFLASLDRSFVIKRLRLEG</sequence>
<gene>
    <name type="primary">lysS</name>
    <name type="ordered locus">PH0224</name>
</gene>